<name>RBFA_BORPD</name>
<dbReference type="EMBL" id="AM902716">
    <property type="protein sequence ID" value="CAP43474.1"/>
    <property type="molecule type" value="Genomic_DNA"/>
</dbReference>
<dbReference type="SMR" id="A9ITX2"/>
<dbReference type="STRING" id="94624.Bpet3132"/>
<dbReference type="KEGG" id="bpt:Bpet3132"/>
<dbReference type="eggNOG" id="COG0858">
    <property type="taxonomic scope" value="Bacteria"/>
</dbReference>
<dbReference type="Proteomes" id="UP000001225">
    <property type="component" value="Chromosome"/>
</dbReference>
<dbReference type="GO" id="GO:0005829">
    <property type="term" value="C:cytosol"/>
    <property type="evidence" value="ECO:0007669"/>
    <property type="project" value="TreeGrafter"/>
</dbReference>
<dbReference type="GO" id="GO:0043024">
    <property type="term" value="F:ribosomal small subunit binding"/>
    <property type="evidence" value="ECO:0007669"/>
    <property type="project" value="TreeGrafter"/>
</dbReference>
<dbReference type="GO" id="GO:0030490">
    <property type="term" value="P:maturation of SSU-rRNA"/>
    <property type="evidence" value="ECO:0007669"/>
    <property type="project" value="UniProtKB-UniRule"/>
</dbReference>
<dbReference type="Gene3D" id="3.30.300.20">
    <property type="match status" value="1"/>
</dbReference>
<dbReference type="HAMAP" id="MF_00003">
    <property type="entry name" value="RbfA"/>
    <property type="match status" value="1"/>
</dbReference>
<dbReference type="InterPro" id="IPR015946">
    <property type="entry name" value="KH_dom-like_a/b"/>
</dbReference>
<dbReference type="InterPro" id="IPR000238">
    <property type="entry name" value="RbfA"/>
</dbReference>
<dbReference type="InterPro" id="IPR023799">
    <property type="entry name" value="RbfA_dom_sf"/>
</dbReference>
<dbReference type="NCBIfam" id="TIGR00082">
    <property type="entry name" value="rbfA"/>
    <property type="match status" value="1"/>
</dbReference>
<dbReference type="PANTHER" id="PTHR33515">
    <property type="entry name" value="RIBOSOME-BINDING FACTOR A, CHLOROPLASTIC-RELATED"/>
    <property type="match status" value="1"/>
</dbReference>
<dbReference type="PANTHER" id="PTHR33515:SF1">
    <property type="entry name" value="RIBOSOME-BINDING FACTOR A, CHLOROPLASTIC-RELATED"/>
    <property type="match status" value="1"/>
</dbReference>
<dbReference type="Pfam" id="PF02033">
    <property type="entry name" value="RBFA"/>
    <property type="match status" value="1"/>
</dbReference>
<dbReference type="SUPFAM" id="SSF89919">
    <property type="entry name" value="Ribosome-binding factor A, RbfA"/>
    <property type="match status" value="1"/>
</dbReference>
<feature type="chain" id="PRO_0000334704" description="Ribosome-binding factor A">
    <location>
        <begin position="1"/>
        <end position="136"/>
    </location>
</feature>
<feature type="region of interest" description="Disordered" evidence="2">
    <location>
        <begin position="114"/>
        <end position="136"/>
    </location>
</feature>
<feature type="compositionally biased region" description="Acidic residues" evidence="2">
    <location>
        <begin position="124"/>
        <end position="136"/>
    </location>
</feature>
<keyword id="KW-0963">Cytoplasm</keyword>
<keyword id="KW-0690">Ribosome biogenesis</keyword>
<reference key="1">
    <citation type="journal article" date="2008" name="BMC Genomics">
        <title>The missing link: Bordetella petrii is endowed with both the metabolic versatility of environmental bacteria and virulence traits of pathogenic Bordetellae.</title>
        <authorList>
            <person name="Gross R."/>
            <person name="Guzman C.A."/>
            <person name="Sebaihia M."/>
            <person name="Martin dos Santos V.A.P."/>
            <person name="Pieper D.H."/>
            <person name="Koebnik R."/>
            <person name="Lechner M."/>
            <person name="Bartels D."/>
            <person name="Buhrmester J."/>
            <person name="Choudhuri J.V."/>
            <person name="Ebensen T."/>
            <person name="Gaigalat L."/>
            <person name="Herrmann S."/>
            <person name="Khachane A.N."/>
            <person name="Larisch C."/>
            <person name="Link S."/>
            <person name="Linke B."/>
            <person name="Meyer F."/>
            <person name="Mormann S."/>
            <person name="Nakunst D."/>
            <person name="Rueckert C."/>
            <person name="Schneiker-Bekel S."/>
            <person name="Schulze K."/>
            <person name="Voerholter F.-J."/>
            <person name="Yevsa T."/>
            <person name="Engle J.T."/>
            <person name="Goldman W.E."/>
            <person name="Puehler A."/>
            <person name="Goebel U.B."/>
            <person name="Goesmann A."/>
            <person name="Bloecker H."/>
            <person name="Kaiser O."/>
            <person name="Martinez-Arias R."/>
        </authorList>
    </citation>
    <scope>NUCLEOTIDE SEQUENCE [LARGE SCALE GENOMIC DNA]</scope>
    <source>
        <strain>ATCC BAA-461 / DSM 12804 / CCUG 43448</strain>
    </source>
</reference>
<proteinExistence type="inferred from homology"/>
<organism>
    <name type="scientific">Bordetella petrii (strain ATCC BAA-461 / DSM 12804 / CCUG 43448)</name>
    <dbReference type="NCBI Taxonomy" id="340100"/>
    <lineage>
        <taxon>Bacteria</taxon>
        <taxon>Pseudomonadati</taxon>
        <taxon>Pseudomonadota</taxon>
        <taxon>Betaproteobacteria</taxon>
        <taxon>Burkholderiales</taxon>
        <taxon>Alcaligenaceae</taxon>
        <taxon>Bordetella</taxon>
    </lineage>
</organism>
<sequence length="136" mass="15041">MSRHKSKSIPGRNLRLADQIQKDLAGLIQRELDMSRAGLITLSGVELSADYAHAKVYFTVLGAEPDAAAALLNEKAGWLHSQLYKLLHIHTVPTLRFVHDAQIARGIEMSALIDRANRPGPAADEPDEPDEPEDRR</sequence>
<gene>
    <name evidence="1" type="primary">rbfA</name>
    <name type="ordered locus">Bpet3132</name>
</gene>
<accession>A9ITX2</accession>
<evidence type="ECO:0000255" key="1">
    <source>
        <dbReference type="HAMAP-Rule" id="MF_00003"/>
    </source>
</evidence>
<evidence type="ECO:0000256" key="2">
    <source>
        <dbReference type="SAM" id="MobiDB-lite"/>
    </source>
</evidence>
<protein>
    <recommendedName>
        <fullName evidence="1">Ribosome-binding factor A</fullName>
    </recommendedName>
</protein>
<comment type="function">
    <text evidence="1">One of several proteins that assist in the late maturation steps of the functional core of the 30S ribosomal subunit. Associates with free 30S ribosomal subunits (but not with 30S subunits that are part of 70S ribosomes or polysomes). Required for efficient processing of 16S rRNA. May interact with the 5'-terminal helix region of 16S rRNA.</text>
</comment>
<comment type="subunit">
    <text evidence="1">Monomer. Binds 30S ribosomal subunits, but not 50S ribosomal subunits or 70S ribosomes.</text>
</comment>
<comment type="subcellular location">
    <subcellularLocation>
        <location evidence="1">Cytoplasm</location>
    </subcellularLocation>
</comment>
<comment type="similarity">
    <text evidence="1">Belongs to the RbfA family.</text>
</comment>